<proteinExistence type="inferred from homology"/>
<sequence length="598" mass="68696">MIKSYYLFFIILIFLIFINNFILCENNNNNKYNNNNNYPFINVDKIIYTNSSNSIYLVWSNEQFNLILQSSYNEEFDDIVMIGEYFDKIETTGWGELNITFNSNSATIQISDNEQAYFTGFIESVLTGERINQMYNNFAASEFTNSDHTPSPKLIDFLNTQMEFVRDQVFENNGSSQYWYSTGLIMSQFDGLVNGYQQSPFPQLSEIQLYILTSAGDLETLVTLFPSSSSSSSSTTNENKNKNIKISSIKPNFKDELTDCSGFIRILPDYSDVYFGHTTWRYYYALLRIYKFINLQFNFQDTPMEYKVSFSSSPGFISSKDDFYITGNKLAIMETTNNIYNESLYQYTIPQSVLVWQRAMIANMIATNSSDWVKIFSEFNSGTYQNQWMVFDYKLFIPNKQQSSSSLPPNTFWIAEQIPGQVKTADLTNILNEQGYWKSYNIPYFESIYNISGYSEKTDLPPSYQYSYEKCPRSLIFSRNASDVLNFEDMKSLMQFNNYKTDPLSYSSPLNSISSRGDLLTIENGNRSAVAFGGVDSKITSFNQVLTLSCTAISGPSTNGGTLPPFTWSQSPLFQNITHIGVPETFNFDWQEMGPYPN</sequence>
<accession>Q55FN1</accession>
<accession>O76738</accession>
<keyword id="KW-0325">Glycoprotein</keyword>
<keyword id="KW-0378">Hydrolase</keyword>
<keyword id="KW-0442">Lipid degradation</keyword>
<keyword id="KW-0443">Lipid metabolism</keyword>
<keyword id="KW-1185">Reference proteome</keyword>
<keyword id="KW-0964">Secreted</keyword>
<keyword id="KW-0732">Signal</keyword>
<evidence type="ECO:0000250" key="1"/>
<evidence type="ECO:0000255" key="2"/>
<evidence type="ECO:0000305" key="3"/>
<gene>
    <name type="primary">plbG</name>
    <name type="synonym">DG1067</name>
    <name type="ORF">DDB_G0267392</name>
</gene>
<reference key="1">
    <citation type="journal article" date="2005" name="Nature">
        <title>The genome of the social amoeba Dictyostelium discoideum.</title>
        <authorList>
            <person name="Eichinger L."/>
            <person name="Pachebat J.A."/>
            <person name="Gloeckner G."/>
            <person name="Rajandream M.A."/>
            <person name="Sucgang R."/>
            <person name="Berriman M."/>
            <person name="Song J."/>
            <person name="Olsen R."/>
            <person name="Szafranski K."/>
            <person name="Xu Q."/>
            <person name="Tunggal B."/>
            <person name="Kummerfeld S."/>
            <person name="Madera M."/>
            <person name="Konfortov B.A."/>
            <person name="Rivero F."/>
            <person name="Bankier A.T."/>
            <person name="Lehmann R."/>
            <person name="Hamlin N."/>
            <person name="Davies R."/>
            <person name="Gaudet P."/>
            <person name="Fey P."/>
            <person name="Pilcher K."/>
            <person name="Chen G."/>
            <person name="Saunders D."/>
            <person name="Sodergren E.J."/>
            <person name="Davis P."/>
            <person name="Kerhornou A."/>
            <person name="Nie X."/>
            <person name="Hall N."/>
            <person name="Anjard C."/>
            <person name="Hemphill L."/>
            <person name="Bason N."/>
            <person name="Farbrother P."/>
            <person name="Desany B."/>
            <person name="Just E."/>
            <person name="Morio T."/>
            <person name="Rost R."/>
            <person name="Churcher C.M."/>
            <person name="Cooper J."/>
            <person name="Haydock S."/>
            <person name="van Driessche N."/>
            <person name="Cronin A."/>
            <person name="Goodhead I."/>
            <person name="Muzny D.M."/>
            <person name="Mourier T."/>
            <person name="Pain A."/>
            <person name="Lu M."/>
            <person name="Harper D."/>
            <person name="Lindsay R."/>
            <person name="Hauser H."/>
            <person name="James K.D."/>
            <person name="Quiles M."/>
            <person name="Madan Babu M."/>
            <person name="Saito T."/>
            <person name="Buchrieser C."/>
            <person name="Wardroper A."/>
            <person name="Felder M."/>
            <person name="Thangavelu M."/>
            <person name="Johnson D."/>
            <person name="Knights A."/>
            <person name="Loulseged H."/>
            <person name="Mungall K.L."/>
            <person name="Oliver K."/>
            <person name="Price C."/>
            <person name="Quail M.A."/>
            <person name="Urushihara H."/>
            <person name="Hernandez J."/>
            <person name="Rabbinowitsch E."/>
            <person name="Steffen D."/>
            <person name="Sanders M."/>
            <person name="Ma J."/>
            <person name="Kohara Y."/>
            <person name="Sharp S."/>
            <person name="Simmonds M.N."/>
            <person name="Spiegler S."/>
            <person name="Tivey A."/>
            <person name="Sugano S."/>
            <person name="White B."/>
            <person name="Walker D."/>
            <person name="Woodward J.R."/>
            <person name="Winckler T."/>
            <person name="Tanaka Y."/>
            <person name="Shaulsky G."/>
            <person name="Schleicher M."/>
            <person name="Weinstock G.M."/>
            <person name="Rosenthal A."/>
            <person name="Cox E.C."/>
            <person name="Chisholm R.L."/>
            <person name="Gibbs R.A."/>
            <person name="Loomis W.F."/>
            <person name="Platzer M."/>
            <person name="Kay R.R."/>
            <person name="Williams J.G."/>
            <person name="Dear P.H."/>
            <person name="Noegel A.A."/>
            <person name="Barrell B.G."/>
            <person name="Kuspa A."/>
        </authorList>
    </citation>
    <scope>NUCLEOTIDE SEQUENCE [LARGE SCALE GENOMIC DNA]</scope>
    <source>
        <strain>AX4</strain>
    </source>
</reference>
<reference key="2">
    <citation type="submission" date="1998-08" db="EMBL/GenBank/DDBJ databases">
        <title>Dictyostelium discoideum developmental gene DG1067.</title>
        <authorList>
            <person name="Iranfar N."/>
            <person name="Loomis W.F."/>
        </authorList>
    </citation>
    <scope>NUCLEOTIDE SEQUENCE [GENOMIC DNA] OF 175-512</scope>
    <source>
        <strain>AX4</strain>
    </source>
</reference>
<name>PLBLG_DICDI</name>
<dbReference type="EC" id="3.1.1.-"/>
<dbReference type="EMBL" id="AAFI02000003">
    <property type="protein sequence ID" value="EAL73148.1"/>
    <property type="molecule type" value="Genomic_DNA"/>
</dbReference>
<dbReference type="EMBL" id="AF079446">
    <property type="protein sequence ID" value="AAC31917.1"/>
    <property type="molecule type" value="Genomic_DNA"/>
</dbReference>
<dbReference type="RefSeq" id="XP_647502.1">
    <property type="nucleotide sequence ID" value="XM_642410.1"/>
</dbReference>
<dbReference type="SMR" id="Q55FN1"/>
<dbReference type="STRING" id="44689.Q55FN1"/>
<dbReference type="GlyCosmos" id="Q55FN1">
    <property type="glycosylation" value="9 sites, No reported glycans"/>
</dbReference>
<dbReference type="GlyGen" id="Q55FN1">
    <property type="glycosylation" value="9 sites"/>
</dbReference>
<dbReference type="PaxDb" id="44689-DDB0220116"/>
<dbReference type="EnsemblProtists" id="EAL73148">
    <property type="protein sequence ID" value="EAL73148"/>
    <property type="gene ID" value="DDB_G0267392"/>
</dbReference>
<dbReference type="GeneID" id="8616309"/>
<dbReference type="KEGG" id="ddi:DDB_G0267392"/>
<dbReference type="dictyBase" id="DDB_G0267392">
    <property type="gene designation" value="plbG"/>
</dbReference>
<dbReference type="VEuPathDB" id="AmoebaDB:DDB_G0267392"/>
<dbReference type="eggNOG" id="KOG3774">
    <property type="taxonomic scope" value="Eukaryota"/>
</dbReference>
<dbReference type="HOGENOM" id="CLU_027106_4_0_1"/>
<dbReference type="InParanoid" id="Q55FN1"/>
<dbReference type="OMA" id="ISQVTMS"/>
<dbReference type="PhylomeDB" id="Q55FN1"/>
<dbReference type="PRO" id="PR:Q55FN1"/>
<dbReference type="Proteomes" id="UP000002195">
    <property type="component" value="Chromosome 1"/>
</dbReference>
<dbReference type="GO" id="GO:0005576">
    <property type="term" value="C:extracellular region"/>
    <property type="evidence" value="ECO:0000318"/>
    <property type="project" value="GO_Central"/>
</dbReference>
<dbReference type="GO" id="GO:0004620">
    <property type="term" value="F:phospholipase activity"/>
    <property type="evidence" value="ECO:0000250"/>
    <property type="project" value="dictyBase"/>
</dbReference>
<dbReference type="GO" id="GO:0046338">
    <property type="term" value="P:phosphatidylethanolamine catabolic process"/>
    <property type="evidence" value="ECO:0000250"/>
    <property type="project" value="dictyBase"/>
</dbReference>
<dbReference type="GO" id="GO:0031161">
    <property type="term" value="P:phosphatidylinositol catabolic process"/>
    <property type="evidence" value="ECO:0000250"/>
    <property type="project" value="dictyBase"/>
</dbReference>
<dbReference type="GO" id="GO:0009395">
    <property type="term" value="P:phospholipid catabolic process"/>
    <property type="evidence" value="ECO:0000250"/>
    <property type="project" value="dictyBase"/>
</dbReference>
<dbReference type="FunFam" id="3.60.60.30:FF:000001">
    <property type="entry name" value="Phospholipase B-like protein G"/>
    <property type="match status" value="1"/>
</dbReference>
<dbReference type="Gene3D" id="3.60.60.30">
    <property type="match status" value="1"/>
</dbReference>
<dbReference type="InterPro" id="IPR007000">
    <property type="entry name" value="PLipase_B-like"/>
</dbReference>
<dbReference type="PANTHER" id="PTHR12370:SF25">
    <property type="entry name" value="PHOSPHOLIPASE B-LIKE PROTEIN G"/>
    <property type="match status" value="1"/>
</dbReference>
<dbReference type="PANTHER" id="PTHR12370">
    <property type="entry name" value="PHOSPHOLIPASE B-RELATED"/>
    <property type="match status" value="1"/>
</dbReference>
<dbReference type="Pfam" id="PF04916">
    <property type="entry name" value="Phospholip_B"/>
    <property type="match status" value="1"/>
</dbReference>
<protein>
    <recommendedName>
        <fullName>Phospholipase B-like protein G</fullName>
        <ecNumber>3.1.1.-</ecNumber>
    </recommendedName>
    <alternativeName>
        <fullName>Developmental gene 1067 protein</fullName>
    </alternativeName>
</protein>
<comment type="function">
    <text evidence="1">Probable phospholipase.</text>
</comment>
<comment type="subcellular location">
    <subcellularLocation>
        <location evidence="3">Secreted</location>
    </subcellularLocation>
</comment>
<comment type="similarity">
    <text evidence="3">Belongs to the phospholipase B-like family.</text>
</comment>
<feature type="signal peptide" evidence="2">
    <location>
        <begin position="1"/>
        <end position="24"/>
    </location>
</feature>
<feature type="chain" id="PRO_0000286123" description="Phospholipase B-like protein G">
    <location>
        <begin position="25"/>
        <end position="598"/>
    </location>
</feature>
<feature type="glycosylation site" description="N-linked (GlcNAc...) asparagine" evidence="2">
    <location>
        <position position="50"/>
    </location>
</feature>
<feature type="glycosylation site" description="N-linked (GlcNAc...) asparagine" evidence="2">
    <location>
        <position position="98"/>
    </location>
</feature>
<feature type="glycosylation site" description="N-linked (GlcNAc...) asparagine" evidence="2">
    <location>
        <position position="173"/>
    </location>
</feature>
<feature type="glycosylation site" description="N-linked (GlcNAc...) asparagine" evidence="2">
    <location>
        <position position="341"/>
    </location>
</feature>
<feature type="glycosylation site" description="N-linked (GlcNAc...) asparagine" evidence="2">
    <location>
        <position position="368"/>
    </location>
</feature>
<feature type="glycosylation site" description="N-linked (GlcNAc...) asparagine" evidence="2">
    <location>
        <position position="450"/>
    </location>
</feature>
<feature type="glycosylation site" description="N-linked (GlcNAc...) asparagine" evidence="2">
    <location>
        <position position="480"/>
    </location>
</feature>
<feature type="glycosylation site" description="N-linked (GlcNAc...) asparagine" evidence="2">
    <location>
        <position position="526"/>
    </location>
</feature>
<feature type="glycosylation site" description="N-linked (GlcNAc...) asparagine" evidence="2">
    <location>
        <position position="576"/>
    </location>
</feature>
<organism>
    <name type="scientific">Dictyostelium discoideum</name>
    <name type="common">Social amoeba</name>
    <dbReference type="NCBI Taxonomy" id="44689"/>
    <lineage>
        <taxon>Eukaryota</taxon>
        <taxon>Amoebozoa</taxon>
        <taxon>Evosea</taxon>
        <taxon>Eumycetozoa</taxon>
        <taxon>Dictyostelia</taxon>
        <taxon>Dictyosteliales</taxon>
        <taxon>Dictyosteliaceae</taxon>
        <taxon>Dictyostelium</taxon>
    </lineage>
</organism>